<proteinExistence type="inferred from homology"/>
<gene>
    <name evidence="1" type="primary">gloB</name>
    <name type="ordered locus">Mfla_1481</name>
</gene>
<name>GLO2_METFK</name>
<keyword id="KW-0378">Hydrolase</keyword>
<keyword id="KW-0479">Metal-binding</keyword>
<keyword id="KW-1185">Reference proteome</keyword>
<keyword id="KW-0862">Zinc</keyword>
<dbReference type="EC" id="3.1.2.6" evidence="1"/>
<dbReference type="EMBL" id="CP000284">
    <property type="protein sequence ID" value="ABE49749.1"/>
    <property type="molecule type" value="Genomic_DNA"/>
</dbReference>
<dbReference type="RefSeq" id="WP_011479703.1">
    <property type="nucleotide sequence ID" value="NC_007947.1"/>
</dbReference>
<dbReference type="SMR" id="Q1H188"/>
<dbReference type="STRING" id="265072.Mfla_1481"/>
<dbReference type="KEGG" id="mfa:Mfla_1481"/>
<dbReference type="eggNOG" id="COG0491">
    <property type="taxonomic scope" value="Bacteria"/>
</dbReference>
<dbReference type="HOGENOM" id="CLU_030571_4_1_4"/>
<dbReference type="OrthoDB" id="9802248at2"/>
<dbReference type="UniPathway" id="UPA00619">
    <property type="reaction ID" value="UER00676"/>
</dbReference>
<dbReference type="Proteomes" id="UP000002440">
    <property type="component" value="Chromosome"/>
</dbReference>
<dbReference type="GO" id="GO:0004416">
    <property type="term" value="F:hydroxyacylglutathione hydrolase activity"/>
    <property type="evidence" value="ECO:0007669"/>
    <property type="project" value="UniProtKB-UniRule"/>
</dbReference>
<dbReference type="GO" id="GO:0046872">
    <property type="term" value="F:metal ion binding"/>
    <property type="evidence" value="ECO:0007669"/>
    <property type="project" value="UniProtKB-KW"/>
</dbReference>
<dbReference type="GO" id="GO:0019243">
    <property type="term" value="P:methylglyoxal catabolic process to D-lactate via S-lactoyl-glutathione"/>
    <property type="evidence" value="ECO:0007669"/>
    <property type="project" value="InterPro"/>
</dbReference>
<dbReference type="CDD" id="cd07723">
    <property type="entry name" value="hydroxyacylglutathione_hydrolase_MBL-fold"/>
    <property type="match status" value="1"/>
</dbReference>
<dbReference type="Gene3D" id="3.60.15.10">
    <property type="entry name" value="Ribonuclease Z/Hydroxyacylglutathione hydrolase-like"/>
    <property type="match status" value="1"/>
</dbReference>
<dbReference type="HAMAP" id="MF_01374">
    <property type="entry name" value="Glyoxalase_2"/>
    <property type="match status" value="1"/>
</dbReference>
<dbReference type="InterPro" id="IPR035680">
    <property type="entry name" value="Clx_II_MBL"/>
</dbReference>
<dbReference type="InterPro" id="IPR050110">
    <property type="entry name" value="Glyoxalase_II_hydrolase"/>
</dbReference>
<dbReference type="InterPro" id="IPR032282">
    <property type="entry name" value="HAGH_C"/>
</dbReference>
<dbReference type="InterPro" id="IPR017782">
    <property type="entry name" value="Hydroxyacylglutathione_Hdrlase"/>
</dbReference>
<dbReference type="InterPro" id="IPR001279">
    <property type="entry name" value="Metallo-B-lactamas"/>
</dbReference>
<dbReference type="InterPro" id="IPR036866">
    <property type="entry name" value="RibonucZ/Hydroxyglut_hydro"/>
</dbReference>
<dbReference type="NCBIfam" id="TIGR03413">
    <property type="entry name" value="GSH_gloB"/>
    <property type="match status" value="1"/>
</dbReference>
<dbReference type="PANTHER" id="PTHR43705">
    <property type="entry name" value="HYDROXYACYLGLUTATHIONE HYDROLASE"/>
    <property type="match status" value="1"/>
</dbReference>
<dbReference type="PANTHER" id="PTHR43705:SF1">
    <property type="entry name" value="HYDROXYACYLGLUTATHIONE HYDROLASE GLOB"/>
    <property type="match status" value="1"/>
</dbReference>
<dbReference type="Pfam" id="PF16123">
    <property type="entry name" value="HAGH_C"/>
    <property type="match status" value="1"/>
</dbReference>
<dbReference type="Pfam" id="PF00753">
    <property type="entry name" value="Lactamase_B"/>
    <property type="match status" value="1"/>
</dbReference>
<dbReference type="PIRSF" id="PIRSF005457">
    <property type="entry name" value="Glx"/>
    <property type="match status" value="1"/>
</dbReference>
<dbReference type="SMART" id="SM00849">
    <property type="entry name" value="Lactamase_B"/>
    <property type="match status" value="1"/>
</dbReference>
<dbReference type="SUPFAM" id="SSF56281">
    <property type="entry name" value="Metallo-hydrolase/oxidoreductase"/>
    <property type="match status" value="1"/>
</dbReference>
<comment type="function">
    <text evidence="1">Thiolesterase that catalyzes the hydrolysis of S-D-lactoyl-glutathione to form glutathione and D-lactic acid.</text>
</comment>
<comment type="catalytic activity">
    <reaction evidence="1">
        <text>an S-(2-hydroxyacyl)glutathione + H2O = a 2-hydroxy carboxylate + glutathione + H(+)</text>
        <dbReference type="Rhea" id="RHEA:21864"/>
        <dbReference type="ChEBI" id="CHEBI:15377"/>
        <dbReference type="ChEBI" id="CHEBI:15378"/>
        <dbReference type="ChEBI" id="CHEBI:57925"/>
        <dbReference type="ChEBI" id="CHEBI:58896"/>
        <dbReference type="ChEBI" id="CHEBI:71261"/>
        <dbReference type="EC" id="3.1.2.6"/>
    </reaction>
</comment>
<comment type="cofactor">
    <cofactor evidence="1">
        <name>Zn(2+)</name>
        <dbReference type="ChEBI" id="CHEBI:29105"/>
    </cofactor>
    <text evidence="1">Binds 2 Zn(2+) ions per subunit.</text>
</comment>
<comment type="pathway">
    <text evidence="1">Secondary metabolite metabolism; methylglyoxal degradation; (R)-lactate from methylglyoxal: step 2/2.</text>
</comment>
<comment type="subunit">
    <text evidence="1">Monomer.</text>
</comment>
<comment type="similarity">
    <text evidence="1">Belongs to the metallo-beta-lactamase superfamily. Glyoxalase II family.</text>
</comment>
<sequence length="250" mass="27188">MFEIIPILAFEDNYIWLLHQHGHALVVDPGDAHPVLEILDARGLQLRAILVTHHHQDHTGGVEELIQATSAQVFAPAKEQFSFPHHPVTAGDRLDIPGIALSLSVLDVPGHTVGHVAYYGDGMLFSGDTLFGAGCGRLFEGTPGQMYSSLQQLAQLPVNTRVYCGHEYTERNLAFALSLEPHHEALLSRREATAALRAQGLPSLPSSMALELATNPFLRCHEPGIIAASKSAATDPVSVFAAIREMRNHF</sequence>
<accession>Q1H188</accession>
<reference key="1">
    <citation type="submission" date="2006-03" db="EMBL/GenBank/DDBJ databases">
        <title>Complete sequence of Methylobacillus flagellatus KT.</title>
        <authorList>
            <consortium name="US DOE Joint Genome Institute"/>
            <person name="Copeland A."/>
            <person name="Lucas S."/>
            <person name="Lapidus A."/>
            <person name="Barry K."/>
            <person name="Detter J.C."/>
            <person name="Glavina del Rio T."/>
            <person name="Hammon N."/>
            <person name="Israni S."/>
            <person name="Dalin E."/>
            <person name="Tice H."/>
            <person name="Pitluck S."/>
            <person name="Brettin T."/>
            <person name="Bruce D."/>
            <person name="Han C."/>
            <person name="Tapia R."/>
            <person name="Saunders E."/>
            <person name="Gilna P."/>
            <person name="Schmutz J."/>
            <person name="Larimer F."/>
            <person name="Land M."/>
            <person name="Kyrpides N."/>
            <person name="Anderson I."/>
            <person name="Richardson P."/>
        </authorList>
    </citation>
    <scope>NUCLEOTIDE SEQUENCE [LARGE SCALE GENOMIC DNA]</scope>
    <source>
        <strain>ATCC 51484 / DSM 6875 / VKM B-1610 / KT</strain>
    </source>
</reference>
<feature type="chain" id="PRO_1000144772" description="Hydroxyacylglutathione hydrolase">
    <location>
        <begin position="1"/>
        <end position="250"/>
    </location>
</feature>
<feature type="binding site" evidence="1">
    <location>
        <position position="53"/>
    </location>
    <ligand>
        <name>Zn(2+)</name>
        <dbReference type="ChEBI" id="CHEBI:29105"/>
        <label>1</label>
    </ligand>
</feature>
<feature type="binding site" evidence="1">
    <location>
        <position position="55"/>
    </location>
    <ligand>
        <name>Zn(2+)</name>
        <dbReference type="ChEBI" id="CHEBI:29105"/>
        <label>1</label>
    </ligand>
</feature>
<feature type="binding site" evidence="1">
    <location>
        <position position="57"/>
    </location>
    <ligand>
        <name>Zn(2+)</name>
        <dbReference type="ChEBI" id="CHEBI:29105"/>
        <label>2</label>
    </ligand>
</feature>
<feature type="binding site" evidence="1">
    <location>
        <position position="58"/>
    </location>
    <ligand>
        <name>Zn(2+)</name>
        <dbReference type="ChEBI" id="CHEBI:29105"/>
        <label>2</label>
    </ligand>
</feature>
<feature type="binding site" evidence="1">
    <location>
        <position position="111"/>
    </location>
    <ligand>
        <name>Zn(2+)</name>
        <dbReference type="ChEBI" id="CHEBI:29105"/>
        <label>1</label>
    </ligand>
</feature>
<feature type="binding site" evidence="1">
    <location>
        <position position="128"/>
    </location>
    <ligand>
        <name>Zn(2+)</name>
        <dbReference type="ChEBI" id="CHEBI:29105"/>
        <label>1</label>
    </ligand>
</feature>
<feature type="binding site" evidence="1">
    <location>
        <position position="128"/>
    </location>
    <ligand>
        <name>Zn(2+)</name>
        <dbReference type="ChEBI" id="CHEBI:29105"/>
        <label>2</label>
    </ligand>
</feature>
<feature type="binding site" evidence="1">
    <location>
        <position position="166"/>
    </location>
    <ligand>
        <name>Zn(2+)</name>
        <dbReference type="ChEBI" id="CHEBI:29105"/>
        <label>2</label>
    </ligand>
</feature>
<organism>
    <name type="scientific">Methylobacillus flagellatus (strain ATCC 51484 / DSM 6875 / VKM B-1610 / KT)</name>
    <dbReference type="NCBI Taxonomy" id="265072"/>
    <lineage>
        <taxon>Bacteria</taxon>
        <taxon>Pseudomonadati</taxon>
        <taxon>Pseudomonadota</taxon>
        <taxon>Betaproteobacteria</taxon>
        <taxon>Nitrosomonadales</taxon>
        <taxon>Methylophilaceae</taxon>
        <taxon>Methylobacillus</taxon>
    </lineage>
</organism>
<evidence type="ECO:0000255" key="1">
    <source>
        <dbReference type="HAMAP-Rule" id="MF_01374"/>
    </source>
</evidence>
<protein>
    <recommendedName>
        <fullName evidence="1">Hydroxyacylglutathione hydrolase</fullName>
        <ecNumber evidence="1">3.1.2.6</ecNumber>
    </recommendedName>
    <alternativeName>
        <fullName evidence="1">Glyoxalase II</fullName>
        <shortName evidence="1">Glx II</shortName>
    </alternativeName>
</protein>